<sequence>MEVDTEEKRHRTRSKGVRVPVEPAIQELFSCPTPGCDGSGHVSGKYARHRSVYGCPLAKKRKTQDKQPQEPAPKRKPFAVKADSSSVDECDDSDGTEDMDEKEEDEGEEYSEDNDEPGDEDEEDEEGDREEEEEIEEEDEDDDEDGEDVEDEEEEEEEEEEEEEEEENEDHQMNCHNTRIMQDTEKDDNNNDEYDNYDELVAKSLLNLGKIAEDAAYRARTESEMNSNTSNSLEDDSDKNENLGRKSELSLDLDSDVVRETVDSLKLLAQGHGVVLSENMNDRNYADSMSQQDSRNMNYVMLGKPMNNGLMEKMVEESDEEVCLSSLECLRNQCFDLARKLSETNPQERNPQQNMNIRQHVRPEEDFPGRTPDRNYSDMLNLMRLEEQLSPRSRVFASCAKEDGCHERDDDTTSVNSDRSEEVFDMTKGNLTLLEKAIALETERAKAMREKMAMEAGRRDNMRSYEDQSPRQLPGEDRKPKSSDSHVKKPYYGKDPSRTEKKESKCPTPGCDGTGHVTGLYPHHRSLSGCPHKDRVPPEILAMHESVLKCPTPGCTGRGHVNSNRNSHRSLSGCPIAAAEKLAKAQEKHQSCDVSKSSQASDRVLRPMCFVKQLEIPQYGYRNNVPTTTPRSNLAKELEKYSKTSFEYNSYDNHTYGKRAIAPKVQTRDISPKGYDDAKRYCKDPSPSSSSTSSYAPSSSSNLSCGGGSSASSTCSKSSFDYTHDMEAAHMAATAILNLSTRCREMPQNLSTKPQDLCATRNPDMEVDENGTLDLSMNKQRPRDSCCPILTPLEPMSPQQQAVMNNRCFQLGEGDCWDLPVDYTKMKPRRIDEDESKDITPEDLDPFQEALEERRYPGEVTIPSPKPKYPQCKESKKDLITLSGCPLADKSIRSMLATSSQELKCPTPGCDGSGHITGNYASHRSLSGCPRAKKSGIRIAQSKEDKEDQEPIRCPVPGCDGQGHITGKYASHRSASGCPLAAKRQKDGYLNGSQFSWKSVKTEGMSCPTPGCDGSGHVSGSFLTHRSLSGCPRATSAMKKAKLSGEQMLTIKQRASNGIENDEEIKQLDEEIKELNESNSQMEADMIKLRTQITTMESNLKTIEEENKVIEQQNESLLHELANLSQSLIHSLANIQLPHMDPINEQNFDAYVTTLTEMYTNQDRYQSPENKALLENIKQAVRGIQV</sequence>
<organism>
    <name type="scientific">Homo sapiens</name>
    <name type="common">Human</name>
    <dbReference type="NCBI Taxonomy" id="9606"/>
    <lineage>
        <taxon>Eukaryota</taxon>
        <taxon>Metazoa</taxon>
        <taxon>Chordata</taxon>
        <taxon>Craniata</taxon>
        <taxon>Vertebrata</taxon>
        <taxon>Euteleostomi</taxon>
        <taxon>Mammalia</taxon>
        <taxon>Eutheria</taxon>
        <taxon>Euarchontoglires</taxon>
        <taxon>Primates</taxon>
        <taxon>Haplorrhini</taxon>
        <taxon>Catarrhini</taxon>
        <taxon>Hominidae</taxon>
        <taxon>Homo</taxon>
    </lineage>
</organism>
<reference key="1">
    <citation type="submission" date="1997-12" db="EMBL/GenBank/DDBJ databases">
        <title>Cloning and expression of the human homologous of the MyT1-L C2HC zinc finger gene.</title>
        <authorList>
            <person name="Wege I."/>
            <person name="Wilhelm C."/>
            <person name="Schulz-Schaeffer W."/>
            <person name="von Beust G."/>
            <person name="Bink K."/>
            <person name="Laccone F."/>
        </authorList>
    </citation>
    <scope>NUCLEOTIDE SEQUENCE [MRNA] (ISOFORM 1)</scope>
</reference>
<reference key="2">
    <citation type="journal article" date="1999" name="DNA Res.">
        <title>Prediction of the coding sequences of unidentified human genes. XIV. The complete sequences of 100 new cDNA clones from brain which code for large proteins in vitro.</title>
        <authorList>
            <person name="Kikuno R."/>
            <person name="Nagase T."/>
            <person name="Ishikawa K."/>
            <person name="Hirosawa M."/>
            <person name="Miyajima N."/>
            <person name="Tanaka A."/>
            <person name="Kotani H."/>
            <person name="Nomura N."/>
            <person name="Ohara O."/>
        </authorList>
    </citation>
    <scope>NUCLEOTIDE SEQUENCE [LARGE SCALE MRNA] (ISOFORM 4)</scope>
    <source>
        <tissue>Brain</tissue>
    </source>
</reference>
<reference key="3">
    <citation type="journal article" date="2002" name="DNA Res.">
        <title>Construction of expression-ready cDNA clones for KIAA genes: manual curation of 330 KIAA cDNA clones.</title>
        <authorList>
            <person name="Nakajima D."/>
            <person name="Okazaki N."/>
            <person name="Yamakawa H."/>
            <person name="Kikuno R."/>
            <person name="Ohara O."/>
            <person name="Nagase T."/>
        </authorList>
    </citation>
    <scope>SEQUENCE REVISION</scope>
</reference>
<reference key="4">
    <citation type="journal article" date="2005" name="Nature">
        <title>Generation and annotation of the DNA sequences of human chromosomes 2 and 4.</title>
        <authorList>
            <person name="Hillier L.W."/>
            <person name="Graves T.A."/>
            <person name="Fulton R.S."/>
            <person name="Fulton L.A."/>
            <person name="Pepin K.H."/>
            <person name="Minx P."/>
            <person name="Wagner-McPherson C."/>
            <person name="Layman D."/>
            <person name="Wylie K."/>
            <person name="Sekhon M."/>
            <person name="Becker M.C."/>
            <person name="Fewell G.A."/>
            <person name="Delehaunty K.D."/>
            <person name="Miner T.L."/>
            <person name="Nash W.E."/>
            <person name="Kremitzki C."/>
            <person name="Oddy L."/>
            <person name="Du H."/>
            <person name="Sun H."/>
            <person name="Bradshaw-Cordum H."/>
            <person name="Ali J."/>
            <person name="Carter J."/>
            <person name="Cordes M."/>
            <person name="Harris A."/>
            <person name="Isak A."/>
            <person name="van Brunt A."/>
            <person name="Nguyen C."/>
            <person name="Du F."/>
            <person name="Courtney L."/>
            <person name="Kalicki J."/>
            <person name="Ozersky P."/>
            <person name="Abbott S."/>
            <person name="Armstrong J."/>
            <person name="Belter E.A."/>
            <person name="Caruso L."/>
            <person name="Cedroni M."/>
            <person name="Cotton M."/>
            <person name="Davidson T."/>
            <person name="Desai A."/>
            <person name="Elliott G."/>
            <person name="Erb T."/>
            <person name="Fronick C."/>
            <person name="Gaige T."/>
            <person name="Haakenson W."/>
            <person name="Haglund K."/>
            <person name="Holmes A."/>
            <person name="Harkins R."/>
            <person name="Kim K."/>
            <person name="Kruchowski S.S."/>
            <person name="Strong C.M."/>
            <person name="Grewal N."/>
            <person name="Goyea E."/>
            <person name="Hou S."/>
            <person name="Levy A."/>
            <person name="Martinka S."/>
            <person name="Mead K."/>
            <person name="McLellan M.D."/>
            <person name="Meyer R."/>
            <person name="Randall-Maher J."/>
            <person name="Tomlinson C."/>
            <person name="Dauphin-Kohlberg S."/>
            <person name="Kozlowicz-Reilly A."/>
            <person name="Shah N."/>
            <person name="Swearengen-Shahid S."/>
            <person name="Snider J."/>
            <person name="Strong J.T."/>
            <person name="Thompson J."/>
            <person name="Yoakum M."/>
            <person name="Leonard S."/>
            <person name="Pearman C."/>
            <person name="Trani L."/>
            <person name="Radionenko M."/>
            <person name="Waligorski J.E."/>
            <person name="Wang C."/>
            <person name="Rock S.M."/>
            <person name="Tin-Wollam A.-M."/>
            <person name="Maupin R."/>
            <person name="Latreille P."/>
            <person name="Wendl M.C."/>
            <person name="Yang S.-P."/>
            <person name="Pohl C."/>
            <person name="Wallis J.W."/>
            <person name="Spieth J."/>
            <person name="Bieri T.A."/>
            <person name="Berkowicz N."/>
            <person name="Nelson J.O."/>
            <person name="Osborne J."/>
            <person name="Ding L."/>
            <person name="Meyer R."/>
            <person name="Sabo A."/>
            <person name="Shotland Y."/>
            <person name="Sinha P."/>
            <person name="Wohldmann P.E."/>
            <person name="Cook L.L."/>
            <person name="Hickenbotham M.T."/>
            <person name="Eldred J."/>
            <person name="Williams D."/>
            <person name="Jones T.A."/>
            <person name="She X."/>
            <person name="Ciccarelli F.D."/>
            <person name="Izaurralde E."/>
            <person name="Taylor J."/>
            <person name="Schmutz J."/>
            <person name="Myers R.M."/>
            <person name="Cox D.R."/>
            <person name="Huang X."/>
            <person name="McPherson J.D."/>
            <person name="Mardis E.R."/>
            <person name="Clifton S.W."/>
            <person name="Warren W.C."/>
            <person name="Chinwalla A.T."/>
            <person name="Eddy S.R."/>
            <person name="Marra M.A."/>
            <person name="Ovcharenko I."/>
            <person name="Furey T.S."/>
            <person name="Miller W."/>
            <person name="Eichler E.E."/>
            <person name="Bork P."/>
            <person name="Suyama M."/>
            <person name="Torrents D."/>
            <person name="Waterston R.H."/>
            <person name="Wilson R.K."/>
        </authorList>
    </citation>
    <scope>NUCLEOTIDE SEQUENCE [LARGE SCALE GENOMIC DNA]</scope>
</reference>
<reference key="5">
    <citation type="journal article" date="2004" name="Genome Res.">
        <title>The status, quality, and expansion of the NIH full-length cDNA project: the Mammalian Gene Collection (MGC).</title>
        <authorList>
            <consortium name="The MGC Project Team"/>
        </authorList>
    </citation>
    <scope>NUCLEOTIDE SEQUENCE [LARGE SCALE MRNA] (ISOFORMS 3 AND 4)</scope>
    <source>
        <tissue>Brain</tissue>
        <tissue>Testis</tissue>
    </source>
</reference>
<reference key="6">
    <citation type="journal article" date="2012" name="N. Engl. J. Med.">
        <title>Diagnostic exome sequencing in persons with severe intellectual disability.</title>
        <authorList>
            <person name="de Ligt J."/>
            <person name="Willemsen M.H."/>
            <person name="van Bon B.W."/>
            <person name="Kleefstra T."/>
            <person name="Yntema H.G."/>
            <person name="Kroes T."/>
            <person name="Vulto-van Silfhout A.T."/>
            <person name="Koolen D.A."/>
            <person name="de Vries P."/>
            <person name="Gilissen C."/>
            <person name="del Rosario M."/>
            <person name="Hoischen A."/>
            <person name="Scheffer H."/>
            <person name="de Vries B.B."/>
            <person name="Brunner H.G."/>
            <person name="Veltman J.A."/>
            <person name="Vissers L.E."/>
        </authorList>
    </citation>
    <scope>INVOLVEMENT IN MRD39</scope>
</reference>
<reference key="7">
    <citation type="journal article" date="2012" name="Science">
        <title>Multiplex targeted sequencing identifies recurrently mutated genes in autism spectrum disorders.</title>
        <authorList>
            <person name="O'Roak B.J."/>
            <person name="Vives L."/>
            <person name="Fu W."/>
            <person name="Egertson J.D."/>
            <person name="Stanaway I.B."/>
            <person name="Phelps I.G."/>
            <person name="Carvill G."/>
            <person name="Kumar A."/>
            <person name="Lee C."/>
            <person name="Ankenman K."/>
            <person name="Munson J."/>
            <person name="Hiatt J.B."/>
            <person name="Turner E.H."/>
            <person name="Levy R."/>
            <person name="O'Day D.R."/>
            <person name="Krumm N."/>
            <person name="Coe B.P."/>
            <person name="Martin B.K."/>
            <person name="Borenstein E."/>
            <person name="Nickerson D.A."/>
            <person name="Mefford H.C."/>
            <person name="Doherty D."/>
            <person name="Akey J.M."/>
            <person name="Bernier R."/>
            <person name="Eichler E.E."/>
            <person name="Shendure J."/>
        </authorList>
    </citation>
    <scope>INVOLVEMENT IN MRD39</scope>
</reference>
<keyword id="KW-0025">Alternative splicing</keyword>
<keyword id="KW-1268">Autism spectrum disorder</keyword>
<keyword id="KW-0158">Chromosome</keyword>
<keyword id="KW-0175">Coiled coil</keyword>
<keyword id="KW-0217">Developmental protein</keyword>
<keyword id="KW-0221">Differentiation</keyword>
<keyword id="KW-0238">DNA-binding</keyword>
<keyword id="KW-0991">Intellectual disability</keyword>
<keyword id="KW-0479">Metal-binding</keyword>
<keyword id="KW-0524">Neurogenesis</keyword>
<keyword id="KW-0539">Nucleus</keyword>
<keyword id="KW-0597">Phosphoprotein</keyword>
<keyword id="KW-1267">Proteomics identification</keyword>
<keyword id="KW-1185">Reference proteome</keyword>
<keyword id="KW-0677">Repeat</keyword>
<keyword id="KW-0678">Repressor</keyword>
<keyword id="KW-0804">Transcription</keyword>
<keyword id="KW-0805">Transcription regulation</keyword>
<keyword id="KW-0862">Zinc</keyword>
<keyword id="KW-0863">Zinc-finger</keyword>
<comment type="function">
    <text evidence="1">Transcription factor that plays a key role in neuronal differentiation by specifically repressing expression of non-neuronal genes during neuron differentiation. In contrast to other transcription repressors that inhibit specific lineages, mediates repression of multiple differentiation programs. Also represses expression of negative regulators of neurogenesis, such as members of the Notch signaling pathway, including HES1. The combination of three transcription factors, ASCL1, POU3F2/BRN2 and MYT1L, is sufficient to reprogram fibroblasts and other somatic cells into induced neuronal (iN) cells in vitro. Directly binds the 5'-AAGTT-3' core motif present on the promoter of target genes and represses transcription by recruiting a multiprotein complex containing SIN3B. The 5'-AAGTT-3' core motif is absent from the promoter of neural genes.</text>
</comment>
<comment type="subunit">
    <text evidence="1">Interacts with SIN3B.</text>
</comment>
<comment type="subcellular location">
    <subcellularLocation>
        <location evidence="1">Nucleus</location>
    </subcellularLocation>
    <subcellularLocation>
        <location evidence="1">Chromosome</location>
    </subcellularLocation>
    <text evidence="1">Preferentially binds to DNA binding sites that are in an open chromatin configuration.</text>
</comment>
<comment type="alternative products">
    <event type="alternative splicing"/>
    <isoform>
        <id>Q9UL68-1</id>
        <name>1</name>
        <sequence type="displayed"/>
    </isoform>
    <isoform>
        <id>Q9UL68-3</id>
        <name>3</name>
        <sequence type="described" ref="VSP_015722 VSP_015725"/>
    </isoform>
    <isoform>
        <id>Q9UL68-4</id>
        <name>4</name>
        <sequence type="described" ref="VSP_015724"/>
    </isoform>
</comment>
<comment type="disease" evidence="5 6">
    <disease id="DI-04498">
        <name>Intellectual developmental disorder, autosomal dominant 39</name>
        <acronym>MRD39</acronym>
        <description>A disorder characterized by significantly below average general intellectual functioning associated with impairments in adaptive behavior and manifested during the developmental period. MRD39 patients show delayed psychomotor development and autistic features.</description>
        <dbReference type="MIM" id="616521"/>
    </disease>
    <text>The disease is caused by variants affecting the gene represented in this entry.</text>
</comment>
<comment type="similarity">
    <text evidence="10">Belongs to the MYT1 family.</text>
</comment>
<comment type="sequence caution" evidence="10">
    <conflict type="frameshift">
        <sequence resource="EMBL-CDS" id="AAF14051"/>
    </conflict>
</comment>
<comment type="sequence caution" evidence="10">
    <conflict type="miscellaneous discrepancy">
        <sequence resource="EMBL-CDS" id="AAI50282"/>
    </conflict>
    <text>Aberrant splicing.</text>
</comment>
<comment type="sequence caution" evidence="10">
    <conflict type="erroneous initiation">
        <sequence resource="EMBL-CDS" id="BAA83058"/>
    </conflict>
    <text>Extended N-terminus.</text>
</comment>
<comment type="sequence caution" evidence="10">
    <conflict type="miscellaneous discrepancy">
        <sequence resource="EMBL-CDS" id="BAA83058"/>
    </conflict>
    <text>Aberrant splicing.</text>
</comment>
<gene>
    <name evidence="9 11" type="primary">MYT1L</name>
    <name evidence="7" type="synonym">KIAA1106</name>
</gene>
<accession>Q9UL68</accession>
<accession>A7E2C7</accession>
<accession>B2RP54</accession>
<accession>Q6IQ17</accession>
<accession>Q9UPP6</accession>
<protein>
    <recommendedName>
        <fullName evidence="9">Myelin transcription factor 1-like protein</fullName>
        <shortName evidence="9">MyT1-L</shortName>
        <shortName evidence="9">MyT1L</shortName>
    </recommendedName>
</protein>
<name>MYT1L_HUMAN</name>
<proteinExistence type="evidence at protein level"/>
<feature type="chain" id="PRO_0000096673" description="Myelin transcription factor 1-like protein">
    <location>
        <begin position="1"/>
        <end position="1186"/>
    </location>
</feature>
<feature type="zinc finger region" description="CCHHC-type 1" evidence="3">
    <location>
        <begin position="22"/>
        <end position="65"/>
    </location>
</feature>
<feature type="zinc finger region" description="CCHHC-type 2" evidence="3">
    <location>
        <begin position="497"/>
        <end position="540"/>
    </location>
</feature>
<feature type="zinc finger region" description="CCHHC-type 3" evidence="3">
    <location>
        <begin position="541"/>
        <end position="584"/>
    </location>
</feature>
<feature type="zinc finger region" description="CCHHC-type 4" evidence="3">
    <location>
        <begin position="896"/>
        <end position="939"/>
    </location>
</feature>
<feature type="zinc finger region" description="CCHHC-type 5" evidence="3">
    <location>
        <begin position="945"/>
        <end position="988"/>
    </location>
</feature>
<feature type="zinc finger region" description="CCHHC-type 6" evidence="3">
    <location>
        <begin position="998"/>
        <end position="1041"/>
    </location>
</feature>
<feature type="region of interest" description="Disordered" evidence="4">
    <location>
        <begin position="1"/>
        <end position="21"/>
    </location>
</feature>
<feature type="region of interest" description="Disordered" evidence="4">
    <location>
        <begin position="56"/>
        <end position="175"/>
    </location>
</feature>
<feature type="region of interest" description="Disordered" evidence="4">
    <location>
        <begin position="220"/>
        <end position="247"/>
    </location>
</feature>
<feature type="region of interest" description="Disordered" evidence="4">
    <location>
        <begin position="342"/>
        <end position="372"/>
    </location>
</feature>
<feature type="region of interest" description="Disordered" evidence="4">
    <location>
        <begin position="449"/>
        <end position="513"/>
    </location>
</feature>
<feature type="region of interest" description="Disordered" evidence="4">
    <location>
        <begin position="659"/>
        <end position="709"/>
    </location>
</feature>
<feature type="region of interest" description="Disordered" evidence="4">
    <location>
        <begin position="753"/>
        <end position="780"/>
    </location>
</feature>
<feature type="coiled-coil region" evidence="2">
    <location>
        <begin position="1056"/>
        <end position="1130"/>
    </location>
</feature>
<feature type="compositionally biased region" description="Acidic residues" evidence="4">
    <location>
        <begin position="86"/>
        <end position="169"/>
    </location>
</feature>
<feature type="compositionally biased region" description="Polar residues" evidence="4">
    <location>
        <begin position="343"/>
        <end position="357"/>
    </location>
</feature>
<feature type="compositionally biased region" description="Basic and acidic residues" evidence="4">
    <location>
        <begin position="361"/>
        <end position="372"/>
    </location>
</feature>
<feature type="compositionally biased region" description="Basic and acidic residues" evidence="4">
    <location>
        <begin position="449"/>
        <end position="487"/>
    </location>
</feature>
<feature type="compositionally biased region" description="Basic and acidic residues" evidence="4">
    <location>
        <begin position="495"/>
        <end position="505"/>
    </location>
</feature>
<feature type="compositionally biased region" description="Basic and acidic residues" evidence="4">
    <location>
        <begin position="666"/>
        <end position="683"/>
    </location>
</feature>
<feature type="compositionally biased region" description="Low complexity" evidence="4">
    <location>
        <begin position="685"/>
        <end position="709"/>
    </location>
</feature>
<feature type="binding site" evidence="3">
    <location>
        <position position="31"/>
    </location>
    <ligand>
        <name>Zn(2+)</name>
        <dbReference type="ChEBI" id="CHEBI:29105"/>
        <label>1</label>
    </ligand>
</feature>
<feature type="binding site" evidence="3">
    <location>
        <position position="36"/>
    </location>
    <ligand>
        <name>Zn(2+)</name>
        <dbReference type="ChEBI" id="CHEBI:29105"/>
        <label>1</label>
    </ligand>
</feature>
<feature type="binding site" evidence="3">
    <location>
        <position position="49"/>
    </location>
    <ligand>
        <name>Zn(2+)</name>
        <dbReference type="ChEBI" id="CHEBI:29105"/>
        <label>1</label>
    </ligand>
</feature>
<feature type="binding site" evidence="3">
    <location>
        <position position="55"/>
    </location>
    <ligand>
        <name>Zn(2+)</name>
        <dbReference type="ChEBI" id="CHEBI:29105"/>
        <label>1</label>
    </ligand>
</feature>
<feature type="binding site" evidence="3">
    <location>
        <position position="506"/>
    </location>
    <ligand>
        <name>Zn(2+)</name>
        <dbReference type="ChEBI" id="CHEBI:29105"/>
        <label>2</label>
    </ligand>
</feature>
<feature type="binding site" evidence="3">
    <location>
        <position position="511"/>
    </location>
    <ligand>
        <name>Zn(2+)</name>
        <dbReference type="ChEBI" id="CHEBI:29105"/>
        <label>2</label>
    </ligand>
</feature>
<feature type="binding site" evidence="3">
    <location>
        <position position="524"/>
    </location>
    <ligand>
        <name>Zn(2+)</name>
        <dbReference type="ChEBI" id="CHEBI:29105"/>
        <label>2</label>
    </ligand>
</feature>
<feature type="binding site" evidence="3">
    <location>
        <position position="530"/>
    </location>
    <ligand>
        <name>Zn(2+)</name>
        <dbReference type="ChEBI" id="CHEBI:29105"/>
        <label>2</label>
    </ligand>
</feature>
<feature type="binding site" evidence="3">
    <location>
        <position position="550"/>
    </location>
    <ligand>
        <name>Zn(2+)</name>
        <dbReference type="ChEBI" id="CHEBI:29105"/>
        <label>3</label>
    </ligand>
</feature>
<feature type="binding site" evidence="3">
    <location>
        <position position="555"/>
    </location>
    <ligand>
        <name>Zn(2+)</name>
        <dbReference type="ChEBI" id="CHEBI:29105"/>
        <label>3</label>
    </ligand>
</feature>
<feature type="binding site" evidence="3">
    <location>
        <position position="568"/>
    </location>
    <ligand>
        <name>Zn(2+)</name>
        <dbReference type="ChEBI" id="CHEBI:29105"/>
        <label>3</label>
    </ligand>
</feature>
<feature type="binding site" evidence="3">
    <location>
        <position position="574"/>
    </location>
    <ligand>
        <name>Zn(2+)</name>
        <dbReference type="ChEBI" id="CHEBI:29105"/>
        <label>3</label>
    </ligand>
</feature>
<feature type="binding site" evidence="3">
    <location>
        <position position="905"/>
    </location>
    <ligand>
        <name>Zn(2+)</name>
        <dbReference type="ChEBI" id="CHEBI:29105"/>
        <label>4</label>
    </ligand>
</feature>
<feature type="binding site" evidence="3">
    <location>
        <position position="910"/>
    </location>
    <ligand>
        <name>Zn(2+)</name>
        <dbReference type="ChEBI" id="CHEBI:29105"/>
        <label>4</label>
    </ligand>
</feature>
<feature type="binding site" evidence="3">
    <location>
        <position position="923"/>
    </location>
    <ligand>
        <name>Zn(2+)</name>
        <dbReference type="ChEBI" id="CHEBI:29105"/>
        <label>4</label>
    </ligand>
</feature>
<feature type="binding site" evidence="3">
    <location>
        <position position="929"/>
    </location>
    <ligand>
        <name>Zn(2+)</name>
        <dbReference type="ChEBI" id="CHEBI:29105"/>
        <label>4</label>
    </ligand>
</feature>
<feature type="binding site" evidence="3">
    <location>
        <position position="954"/>
    </location>
    <ligand>
        <name>Zn(2+)</name>
        <dbReference type="ChEBI" id="CHEBI:29105"/>
        <label>5</label>
    </ligand>
</feature>
<feature type="binding site" evidence="3">
    <location>
        <position position="959"/>
    </location>
    <ligand>
        <name>Zn(2+)</name>
        <dbReference type="ChEBI" id="CHEBI:29105"/>
        <label>5</label>
    </ligand>
</feature>
<feature type="binding site" evidence="3">
    <location>
        <position position="972"/>
    </location>
    <ligand>
        <name>Zn(2+)</name>
        <dbReference type="ChEBI" id="CHEBI:29105"/>
        <label>5</label>
    </ligand>
</feature>
<feature type="binding site" evidence="3">
    <location>
        <position position="978"/>
    </location>
    <ligand>
        <name>Zn(2+)</name>
        <dbReference type="ChEBI" id="CHEBI:29105"/>
        <label>5</label>
    </ligand>
</feature>
<feature type="binding site" evidence="3">
    <location>
        <position position="1007"/>
    </location>
    <ligand>
        <name>Zn(2+)</name>
        <dbReference type="ChEBI" id="CHEBI:29105"/>
        <label>6</label>
    </ligand>
</feature>
<feature type="binding site" evidence="3">
    <location>
        <position position="1012"/>
    </location>
    <ligand>
        <name>Zn(2+)</name>
        <dbReference type="ChEBI" id="CHEBI:29105"/>
        <label>6</label>
    </ligand>
</feature>
<feature type="binding site" evidence="3">
    <location>
        <position position="1025"/>
    </location>
    <ligand>
        <name>Zn(2+)</name>
        <dbReference type="ChEBI" id="CHEBI:29105"/>
        <label>6</label>
    </ligand>
</feature>
<feature type="binding site" evidence="3">
    <location>
        <position position="1031"/>
    </location>
    <ligand>
        <name>Zn(2+)</name>
        <dbReference type="ChEBI" id="CHEBI:29105"/>
        <label>6</label>
    </ligand>
</feature>
<feature type="modified residue" description="Phosphoserine" evidence="1">
    <location>
        <position position="250"/>
    </location>
</feature>
<feature type="splice variant" id="VSP_015722" description="In isoform 3." evidence="8">
    <location>
        <begin position="1"/>
        <end position="1004"/>
    </location>
</feature>
<feature type="splice variant" id="VSP_015724" description="In isoform 4." evidence="8">
    <location>
        <begin position="493"/>
        <end position="494"/>
    </location>
</feature>
<feature type="splice variant" id="VSP_015725" description="In isoform 3." evidence="8">
    <original>Q</original>
    <variation>QVT</variation>
    <location>
        <position position="1092"/>
    </location>
</feature>
<feature type="sequence conflict" description="In Ref. 2; BAA83058 and 5; AAI50282." evidence="10" ref="2 5">
    <location>
        <begin position="108"/>
        <end position="159"/>
    </location>
</feature>
<feature type="sequence conflict" description="In Ref. 1; AAF14051." evidence="10" ref="1">
    <original>N</original>
    <variation>S</variation>
    <location>
        <position position="191"/>
    </location>
</feature>
<feature type="sequence conflict" description="In Ref. 1; AAF14051." evidence="10" ref="1">
    <original>S</original>
    <variation>R</variation>
    <location>
        <position position="935"/>
    </location>
</feature>
<feature type="sequence conflict" description="In Ref. 1; AAF14051." evidence="10" ref="1">
    <original>D</original>
    <variation>E</variation>
    <location>
        <position position="987"/>
    </location>
</feature>
<feature type="sequence conflict" description="In Ref. 1; AAF14051." evidence="10" ref="1">
    <original>I</original>
    <variation>V</variation>
    <location>
        <position position="1110"/>
    </location>
</feature>
<dbReference type="EMBL" id="AF036943">
    <property type="protein sequence ID" value="AAF14051.1"/>
    <property type="status" value="ALT_FRAME"/>
    <property type="molecule type" value="mRNA"/>
</dbReference>
<dbReference type="EMBL" id="AB029029">
    <property type="protein sequence ID" value="BAA83058.2"/>
    <property type="status" value="ALT_SEQ"/>
    <property type="molecule type" value="mRNA"/>
</dbReference>
<dbReference type="EMBL" id="AC008276">
    <property type="status" value="NOT_ANNOTATED_CDS"/>
    <property type="molecule type" value="Genomic_DNA"/>
</dbReference>
<dbReference type="EMBL" id="AC009232">
    <property type="status" value="NOT_ANNOTATED_CDS"/>
    <property type="molecule type" value="Genomic_DNA"/>
</dbReference>
<dbReference type="EMBL" id="AC009471">
    <property type="status" value="NOT_ANNOTATED_CDS"/>
    <property type="molecule type" value="Genomic_DNA"/>
</dbReference>
<dbReference type="EMBL" id="AC011301">
    <property type="status" value="NOT_ANNOTATED_CDS"/>
    <property type="molecule type" value="Genomic_DNA"/>
</dbReference>
<dbReference type="EMBL" id="AC093390">
    <property type="status" value="NOT_ANNOTATED_CDS"/>
    <property type="molecule type" value="Genomic_DNA"/>
</dbReference>
<dbReference type="EMBL" id="AC106046">
    <property type="status" value="NOT_ANNOTATED_CDS"/>
    <property type="molecule type" value="Genomic_DNA"/>
</dbReference>
<dbReference type="EMBL" id="BC071612">
    <property type="protein sequence ID" value="AAH71612.1"/>
    <property type="molecule type" value="mRNA"/>
</dbReference>
<dbReference type="EMBL" id="BC137272">
    <property type="protein sequence ID" value="AAI37273.1"/>
    <property type="molecule type" value="mRNA"/>
</dbReference>
<dbReference type="EMBL" id="BC137273">
    <property type="protein sequence ID" value="AAI37274.1"/>
    <property type="molecule type" value="mRNA"/>
</dbReference>
<dbReference type="EMBL" id="BC150281">
    <property type="protein sequence ID" value="AAI50282.1"/>
    <property type="status" value="ALT_SEQ"/>
    <property type="molecule type" value="mRNA"/>
</dbReference>
<dbReference type="CCDS" id="CCDS46222.1">
    <molecule id="Q9UL68-4"/>
</dbReference>
<dbReference type="CCDS" id="CCDS77378.1">
    <molecule id="Q9UL68-1"/>
</dbReference>
<dbReference type="RefSeq" id="NP_001289981.1">
    <molecule id="Q9UL68-1"/>
    <property type="nucleotide sequence ID" value="NM_001303052.2"/>
</dbReference>
<dbReference type="RefSeq" id="NP_001316773.1">
    <molecule id="Q9UL68-1"/>
    <property type="nucleotide sequence ID" value="NM_001329844.2"/>
</dbReference>
<dbReference type="RefSeq" id="NP_001316774.1">
    <molecule id="Q9UL68-1"/>
    <property type="nucleotide sequence ID" value="NM_001329845.1"/>
</dbReference>
<dbReference type="RefSeq" id="NP_001316776.1">
    <molecule id="Q9UL68-4"/>
    <property type="nucleotide sequence ID" value="NM_001329847.2"/>
</dbReference>
<dbReference type="RefSeq" id="NP_001316777.1">
    <molecule id="Q9UL68-4"/>
    <property type="nucleotide sequence ID" value="NM_001329848.1"/>
</dbReference>
<dbReference type="RefSeq" id="NP_055840.2">
    <molecule id="Q9UL68-4"/>
    <property type="nucleotide sequence ID" value="NM_015025.4"/>
</dbReference>
<dbReference type="SMR" id="Q9UL68"/>
<dbReference type="BioGRID" id="116679">
    <property type="interactions" value="8"/>
</dbReference>
<dbReference type="FunCoup" id="Q9UL68">
    <property type="interactions" value="1150"/>
</dbReference>
<dbReference type="IntAct" id="Q9UL68">
    <property type="interactions" value="9"/>
</dbReference>
<dbReference type="STRING" id="9606.ENSP00000497479"/>
<dbReference type="GlyGen" id="Q9UL68">
    <property type="glycosylation" value="5 sites"/>
</dbReference>
<dbReference type="iPTMnet" id="Q9UL68"/>
<dbReference type="PhosphoSitePlus" id="Q9UL68"/>
<dbReference type="BioMuta" id="MYT1L"/>
<dbReference type="DMDM" id="327478568"/>
<dbReference type="jPOST" id="Q9UL68"/>
<dbReference type="MassIVE" id="Q9UL68"/>
<dbReference type="PaxDb" id="9606-ENSP00000396103"/>
<dbReference type="PeptideAtlas" id="Q9UL68"/>
<dbReference type="ProteomicsDB" id="84961">
    <molecule id="Q9UL68-1"/>
</dbReference>
<dbReference type="ProteomicsDB" id="84963">
    <molecule id="Q9UL68-3"/>
</dbReference>
<dbReference type="ProteomicsDB" id="84964">
    <molecule id="Q9UL68-4"/>
</dbReference>
<dbReference type="Antibodypedia" id="62900">
    <property type="antibodies" value="59 antibodies from 25 providers"/>
</dbReference>
<dbReference type="DNASU" id="23040"/>
<dbReference type="Ensembl" id="ENST00000399161.8">
    <molecule id="Q9UL68-4"/>
    <property type="protein sequence ID" value="ENSP00000382114.3"/>
    <property type="gene ID" value="ENSG00000186487.21"/>
</dbReference>
<dbReference type="Ensembl" id="ENST00000407844.6">
    <molecule id="Q9UL68-3"/>
    <property type="protein sequence ID" value="ENSP00000384219.1"/>
    <property type="gene ID" value="ENSG00000186487.21"/>
</dbReference>
<dbReference type="Ensembl" id="ENST00000428368.7">
    <molecule id="Q9UL68-1"/>
    <property type="protein sequence ID" value="ENSP00000396103.3"/>
    <property type="gene ID" value="ENSG00000186487.21"/>
</dbReference>
<dbReference type="Ensembl" id="ENST00000647694.1">
    <molecule id="Q9UL68-1"/>
    <property type="protein sequence ID" value="ENSP00000497722.1"/>
    <property type="gene ID" value="ENSG00000186487.21"/>
</dbReference>
<dbReference type="Ensembl" id="ENST00000647738.2">
    <molecule id="Q9UL68-1"/>
    <property type="protein sequence ID" value="ENSP00000497479.2"/>
    <property type="gene ID" value="ENSG00000186487.21"/>
</dbReference>
<dbReference type="Ensembl" id="ENST00000648316.1">
    <molecule id="Q9UL68-4"/>
    <property type="protein sequence ID" value="ENSP00000497870.1"/>
    <property type="gene ID" value="ENSG00000186487.21"/>
</dbReference>
<dbReference type="Ensembl" id="ENST00000648928.1">
    <molecule id="Q9UL68-4"/>
    <property type="protein sequence ID" value="ENSP00000497017.1"/>
    <property type="gene ID" value="ENSG00000186487.21"/>
</dbReference>
<dbReference type="Ensembl" id="ENST00000649207.1">
    <molecule id="Q9UL68-4"/>
    <property type="protein sequence ID" value="ENSP00000496986.1"/>
    <property type="gene ID" value="ENSG00000186487.21"/>
</dbReference>
<dbReference type="GeneID" id="23040"/>
<dbReference type="KEGG" id="hsa:23040"/>
<dbReference type="MANE-Select" id="ENST00000647738.2">
    <property type="protein sequence ID" value="ENSP00000497479.2"/>
    <property type="RefSeq nucleotide sequence ID" value="NM_001303052.2"/>
    <property type="RefSeq protein sequence ID" value="NP_001289981.1"/>
</dbReference>
<dbReference type="UCSC" id="uc002qxd.4">
    <molecule id="Q9UL68-1"/>
    <property type="organism name" value="human"/>
</dbReference>
<dbReference type="AGR" id="HGNC:7623"/>
<dbReference type="CTD" id="23040"/>
<dbReference type="DisGeNET" id="23040"/>
<dbReference type="GeneCards" id="MYT1L"/>
<dbReference type="HGNC" id="HGNC:7623">
    <property type="gene designation" value="MYT1L"/>
</dbReference>
<dbReference type="HPA" id="ENSG00000186487">
    <property type="expression patterns" value="Group enriched (brain, pituitary gland)"/>
</dbReference>
<dbReference type="MalaCards" id="MYT1L"/>
<dbReference type="MIM" id="613084">
    <property type="type" value="gene"/>
</dbReference>
<dbReference type="MIM" id="616521">
    <property type="type" value="phenotype"/>
</dbReference>
<dbReference type="neXtProt" id="NX_Q9UL68"/>
<dbReference type="OpenTargets" id="ENSG00000186487"/>
<dbReference type="Orphanet" id="647799">
    <property type="disease" value="MYT1L-related developmental delay-intellectual disability-obesity syndrome"/>
</dbReference>
<dbReference type="PharmGKB" id="PA31427"/>
<dbReference type="VEuPathDB" id="HostDB:ENSG00000186487"/>
<dbReference type="eggNOG" id="KOG3803">
    <property type="taxonomic scope" value="Eukaryota"/>
</dbReference>
<dbReference type="GeneTree" id="ENSGT00940000155671"/>
<dbReference type="HOGENOM" id="CLU_1622834_0_0_1"/>
<dbReference type="InParanoid" id="Q9UL68"/>
<dbReference type="OMA" id="ECYESDA"/>
<dbReference type="OrthoDB" id="10069059at2759"/>
<dbReference type="PAN-GO" id="Q9UL68">
    <property type="GO annotations" value="4 GO annotations based on evolutionary models"/>
</dbReference>
<dbReference type="PhylomeDB" id="Q9UL68"/>
<dbReference type="TreeFam" id="TF317299"/>
<dbReference type="PathwayCommons" id="Q9UL68"/>
<dbReference type="SignaLink" id="Q9UL68"/>
<dbReference type="SIGNOR" id="Q9UL68"/>
<dbReference type="BioGRID-ORCS" id="23040">
    <property type="hits" value="39 hits in 1173 CRISPR screens"/>
</dbReference>
<dbReference type="ChiTaRS" id="MYT1L">
    <property type="organism name" value="human"/>
</dbReference>
<dbReference type="GenomeRNAi" id="23040"/>
<dbReference type="Pharos" id="Q9UL68">
    <property type="development level" value="Tbio"/>
</dbReference>
<dbReference type="PRO" id="PR:Q9UL68"/>
<dbReference type="Proteomes" id="UP000005640">
    <property type="component" value="Chromosome 2"/>
</dbReference>
<dbReference type="RNAct" id="Q9UL68">
    <property type="molecule type" value="protein"/>
</dbReference>
<dbReference type="Bgee" id="ENSG00000186487">
    <property type="expression patterns" value="Expressed in endothelial cell and 136 other cell types or tissues"/>
</dbReference>
<dbReference type="ExpressionAtlas" id="Q9UL68">
    <property type="expression patterns" value="baseline and differential"/>
</dbReference>
<dbReference type="GO" id="GO:0000785">
    <property type="term" value="C:chromatin"/>
    <property type="evidence" value="ECO:0000247"/>
    <property type="project" value="NTNU_SB"/>
</dbReference>
<dbReference type="GO" id="GO:0005634">
    <property type="term" value="C:nucleus"/>
    <property type="evidence" value="ECO:0000250"/>
    <property type="project" value="UniProtKB"/>
</dbReference>
<dbReference type="GO" id="GO:0050897">
    <property type="term" value="F:cobalt ion binding"/>
    <property type="evidence" value="ECO:0007669"/>
    <property type="project" value="Ensembl"/>
</dbReference>
<dbReference type="GO" id="GO:0001228">
    <property type="term" value="F:DNA-binding transcription activator activity, RNA polymerase II-specific"/>
    <property type="evidence" value="ECO:0007669"/>
    <property type="project" value="Ensembl"/>
</dbReference>
<dbReference type="GO" id="GO:0000981">
    <property type="term" value="F:DNA-binding transcription factor activity, RNA polymerase II-specific"/>
    <property type="evidence" value="ECO:0000247"/>
    <property type="project" value="NTNU_SB"/>
</dbReference>
<dbReference type="GO" id="GO:0001227">
    <property type="term" value="F:DNA-binding transcription repressor activity, RNA polymerase II-specific"/>
    <property type="evidence" value="ECO:0000250"/>
    <property type="project" value="UniProtKB"/>
</dbReference>
<dbReference type="GO" id="GO:0140487">
    <property type="term" value="F:metal ion sequestering activity"/>
    <property type="evidence" value="ECO:0007669"/>
    <property type="project" value="Ensembl"/>
</dbReference>
<dbReference type="GO" id="GO:0044323">
    <property type="term" value="F:retinoic acid-responsive element binding"/>
    <property type="evidence" value="ECO:0007669"/>
    <property type="project" value="Ensembl"/>
</dbReference>
<dbReference type="GO" id="GO:0003713">
    <property type="term" value="F:transcription coactivator activity"/>
    <property type="evidence" value="ECO:0007669"/>
    <property type="project" value="Ensembl"/>
</dbReference>
<dbReference type="GO" id="GO:0008270">
    <property type="term" value="F:zinc ion binding"/>
    <property type="evidence" value="ECO:0007669"/>
    <property type="project" value="UniProtKB-KW"/>
</dbReference>
<dbReference type="GO" id="GO:0000122">
    <property type="term" value="P:negative regulation of transcription by RNA polymerase II"/>
    <property type="evidence" value="ECO:0000250"/>
    <property type="project" value="UniProtKB"/>
</dbReference>
<dbReference type="GO" id="GO:0007399">
    <property type="term" value="P:nervous system development"/>
    <property type="evidence" value="ECO:0000250"/>
    <property type="project" value="UniProtKB"/>
</dbReference>
<dbReference type="GO" id="GO:0048666">
    <property type="term" value="P:neuron development"/>
    <property type="evidence" value="ECO:0000250"/>
    <property type="project" value="UniProtKB"/>
</dbReference>
<dbReference type="GO" id="GO:0030182">
    <property type="term" value="P:neuron differentiation"/>
    <property type="evidence" value="ECO:0000250"/>
    <property type="project" value="UniProtKB"/>
</dbReference>
<dbReference type="GO" id="GO:0048663">
    <property type="term" value="P:neuron fate commitment"/>
    <property type="evidence" value="ECO:0000250"/>
    <property type="project" value="UniProtKB"/>
</dbReference>
<dbReference type="GO" id="GO:0048665">
    <property type="term" value="P:neuron fate specification"/>
    <property type="evidence" value="ECO:0000250"/>
    <property type="project" value="UniProtKB"/>
</dbReference>
<dbReference type="GO" id="GO:0006357">
    <property type="term" value="P:regulation of transcription by RNA polymerase II"/>
    <property type="evidence" value="ECO:0000250"/>
    <property type="project" value="UniProtKB"/>
</dbReference>
<dbReference type="FunFam" id="4.10.320.30:FF:000001">
    <property type="entry name" value="Myelin transcription factor 1-like, a"/>
    <property type="match status" value="6"/>
</dbReference>
<dbReference type="Gene3D" id="4.10.320.30">
    <property type="match status" value="6"/>
</dbReference>
<dbReference type="InterPro" id="IPR013681">
    <property type="entry name" value="Myelin_TF"/>
</dbReference>
<dbReference type="InterPro" id="IPR002515">
    <property type="entry name" value="Znf_C2H2C"/>
</dbReference>
<dbReference type="InterPro" id="IPR036060">
    <property type="entry name" value="Znf_C2H2C_sf"/>
</dbReference>
<dbReference type="PANTHER" id="PTHR10816:SF15">
    <property type="entry name" value="MYELIN TRANSCRIPTION FACTOR 1-LIKE PROTEIN"/>
    <property type="match status" value="1"/>
</dbReference>
<dbReference type="PANTHER" id="PTHR10816">
    <property type="entry name" value="MYELIN TRANSCRIPTION FACTOR 1-RELATED"/>
    <property type="match status" value="1"/>
</dbReference>
<dbReference type="Pfam" id="PF08474">
    <property type="entry name" value="MYT1"/>
    <property type="match status" value="1"/>
</dbReference>
<dbReference type="Pfam" id="PF01530">
    <property type="entry name" value="zf-C2HC"/>
    <property type="match status" value="6"/>
</dbReference>
<dbReference type="SUPFAM" id="SSF103637">
    <property type="entry name" value="CCHHC domain"/>
    <property type="match status" value="6"/>
</dbReference>
<dbReference type="PROSITE" id="PS51802">
    <property type="entry name" value="ZF_CCHHC"/>
    <property type="match status" value="6"/>
</dbReference>
<evidence type="ECO:0000250" key="1">
    <source>
        <dbReference type="UniProtKB" id="P97500"/>
    </source>
</evidence>
<evidence type="ECO:0000255" key="2"/>
<evidence type="ECO:0000255" key="3">
    <source>
        <dbReference type="PROSITE-ProRule" id="PRU01143"/>
    </source>
</evidence>
<evidence type="ECO:0000256" key="4">
    <source>
        <dbReference type="SAM" id="MobiDB-lite"/>
    </source>
</evidence>
<evidence type="ECO:0000269" key="5">
    <source>
    </source>
</evidence>
<evidence type="ECO:0000269" key="6">
    <source>
    </source>
</evidence>
<evidence type="ECO:0000303" key="7">
    <source>
    </source>
</evidence>
<evidence type="ECO:0000303" key="8">
    <source>
    </source>
</evidence>
<evidence type="ECO:0000303" key="9">
    <source ref="1"/>
</evidence>
<evidence type="ECO:0000305" key="10"/>
<evidence type="ECO:0000312" key="11">
    <source>
        <dbReference type="HGNC" id="HGNC:7623"/>
    </source>
</evidence>